<evidence type="ECO:0000255" key="1">
    <source>
        <dbReference type="HAMAP-Rule" id="MF_01039"/>
    </source>
</evidence>
<proteinExistence type="inferred from homology"/>
<keyword id="KW-0312">Gluconeogenesis</keyword>
<keyword id="KW-0324">Glycolysis</keyword>
<keyword id="KW-0413">Isomerase</keyword>
<organism>
    <name type="scientific">Escherichia coli (strain ATCC 8739 / DSM 1576 / NBRC 3972 / NCIMB 8545 / WDCM 00012 / Crooks)</name>
    <dbReference type="NCBI Taxonomy" id="481805"/>
    <lineage>
        <taxon>Bacteria</taxon>
        <taxon>Pseudomonadati</taxon>
        <taxon>Pseudomonadota</taxon>
        <taxon>Gammaproteobacteria</taxon>
        <taxon>Enterobacterales</taxon>
        <taxon>Enterobacteriaceae</taxon>
        <taxon>Escherichia</taxon>
    </lineage>
</organism>
<comment type="function">
    <text evidence="1">Catalyzes the interconversion of 2-phosphoglycerate and 3-phosphoglycerate.</text>
</comment>
<comment type="catalytic activity">
    <reaction evidence="1">
        <text>(2R)-2-phosphoglycerate = (2R)-3-phosphoglycerate</text>
        <dbReference type="Rhea" id="RHEA:15901"/>
        <dbReference type="ChEBI" id="CHEBI:58272"/>
        <dbReference type="ChEBI" id="CHEBI:58289"/>
        <dbReference type="EC" id="5.4.2.11"/>
    </reaction>
</comment>
<comment type="pathway">
    <text evidence="1">Carbohydrate degradation; glycolysis; pyruvate from D-glyceraldehyde 3-phosphate: step 3/5.</text>
</comment>
<comment type="subunit">
    <text evidence="1">Homodimer.</text>
</comment>
<comment type="similarity">
    <text evidence="1">Belongs to the phosphoglycerate mutase family. BPG-dependent PGAM subfamily.</text>
</comment>
<dbReference type="EC" id="5.4.2.11" evidence="1"/>
<dbReference type="EMBL" id="CP000946">
    <property type="protein sequence ID" value="ACA78534.1"/>
    <property type="molecule type" value="Genomic_DNA"/>
</dbReference>
<dbReference type="RefSeq" id="WP_001295305.1">
    <property type="nucleotide sequence ID" value="NZ_MTFT01000029.1"/>
</dbReference>
<dbReference type="SMR" id="B1IXY1"/>
<dbReference type="GeneID" id="93776726"/>
<dbReference type="KEGG" id="ecl:EcolC_2907"/>
<dbReference type="HOGENOM" id="CLU_033323_1_1_6"/>
<dbReference type="UniPathway" id="UPA00109">
    <property type="reaction ID" value="UER00186"/>
</dbReference>
<dbReference type="GO" id="GO:0004619">
    <property type="term" value="F:phosphoglycerate mutase activity"/>
    <property type="evidence" value="ECO:0007669"/>
    <property type="project" value="UniProtKB-EC"/>
</dbReference>
<dbReference type="GO" id="GO:0006094">
    <property type="term" value="P:gluconeogenesis"/>
    <property type="evidence" value="ECO:0007669"/>
    <property type="project" value="UniProtKB-UniRule"/>
</dbReference>
<dbReference type="GO" id="GO:0006096">
    <property type="term" value="P:glycolytic process"/>
    <property type="evidence" value="ECO:0007669"/>
    <property type="project" value="UniProtKB-UniRule"/>
</dbReference>
<dbReference type="CDD" id="cd07067">
    <property type="entry name" value="HP_PGM_like"/>
    <property type="match status" value="1"/>
</dbReference>
<dbReference type="FunFam" id="3.40.50.1240:FF:000003">
    <property type="entry name" value="2,3-bisphosphoglycerate-dependent phosphoglycerate mutase"/>
    <property type="match status" value="1"/>
</dbReference>
<dbReference type="Gene3D" id="3.40.50.1240">
    <property type="entry name" value="Phosphoglycerate mutase-like"/>
    <property type="match status" value="1"/>
</dbReference>
<dbReference type="HAMAP" id="MF_01039">
    <property type="entry name" value="PGAM_GpmA"/>
    <property type="match status" value="1"/>
</dbReference>
<dbReference type="InterPro" id="IPR013078">
    <property type="entry name" value="His_Pase_superF_clade-1"/>
</dbReference>
<dbReference type="InterPro" id="IPR029033">
    <property type="entry name" value="His_PPase_superfam"/>
</dbReference>
<dbReference type="InterPro" id="IPR001345">
    <property type="entry name" value="PG/BPGM_mutase_AS"/>
</dbReference>
<dbReference type="InterPro" id="IPR005952">
    <property type="entry name" value="Phosphogly_mut1"/>
</dbReference>
<dbReference type="NCBIfam" id="TIGR01258">
    <property type="entry name" value="pgm_1"/>
    <property type="match status" value="1"/>
</dbReference>
<dbReference type="NCBIfam" id="NF010713">
    <property type="entry name" value="PRK14115.1"/>
    <property type="match status" value="1"/>
</dbReference>
<dbReference type="PANTHER" id="PTHR11931">
    <property type="entry name" value="PHOSPHOGLYCERATE MUTASE"/>
    <property type="match status" value="1"/>
</dbReference>
<dbReference type="Pfam" id="PF00300">
    <property type="entry name" value="His_Phos_1"/>
    <property type="match status" value="1"/>
</dbReference>
<dbReference type="PIRSF" id="PIRSF000709">
    <property type="entry name" value="6PFK_2-Ptase"/>
    <property type="match status" value="1"/>
</dbReference>
<dbReference type="SMART" id="SM00855">
    <property type="entry name" value="PGAM"/>
    <property type="match status" value="1"/>
</dbReference>
<dbReference type="SUPFAM" id="SSF53254">
    <property type="entry name" value="Phosphoglycerate mutase-like"/>
    <property type="match status" value="1"/>
</dbReference>
<dbReference type="PROSITE" id="PS00175">
    <property type="entry name" value="PG_MUTASE"/>
    <property type="match status" value="1"/>
</dbReference>
<feature type="chain" id="PRO_1000084324" description="2,3-bisphosphoglycerate-dependent phosphoglycerate mutase">
    <location>
        <begin position="1"/>
        <end position="250"/>
    </location>
</feature>
<feature type="active site" description="Tele-phosphohistidine intermediate" evidence="1">
    <location>
        <position position="11"/>
    </location>
</feature>
<feature type="active site" description="Proton donor/acceptor" evidence="1">
    <location>
        <position position="89"/>
    </location>
</feature>
<feature type="binding site" evidence="1">
    <location>
        <begin position="10"/>
        <end position="17"/>
    </location>
    <ligand>
        <name>substrate</name>
    </ligand>
</feature>
<feature type="binding site" evidence="1">
    <location>
        <begin position="23"/>
        <end position="24"/>
    </location>
    <ligand>
        <name>substrate</name>
    </ligand>
</feature>
<feature type="binding site" evidence="1">
    <location>
        <position position="62"/>
    </location>
    <ligand>
        <name>substrate</name>
    </ligand>
</feature>
<feature type="binding site" evidence="1">
    <location>
        <begin position="89"/>
        <end position="92"/>
    </location>
    <ligand>
        <name>substrate</name>
    </ligand>
</feature>
<feature type="binding site" evidence="1">
    <location>
        <position position="100"/>
    </location>
    <ligand>
        <name>substrate</name>
    </ligand>
</feature>
<feature type="binding site" evidence="1">
    <location>
        <begin position="116"/>
        <end position="117"/>
    </location>
    <ligand>
        <name>substrate</name>
    </ligand>
</feature>
<feature type="binding site" evidence="1">
    <location>
        <begin position="185"/>
        <end position="186"/>
    </location>
    <ligand>
        <name>substrate</name>
    </ligand>
</feature>
<feature type="site" description="Transition state stabilizer" evidence="1">
    <location>
        <position position="184"/>
    </location>
</feature>
<reference key="1">
    <citation type="submission" date="2008-02" db="EMBL/GenBank/DDBJ databases">
        <title>Complete sequence of Escherichia coli C str. ATCC 8739.</title>
        <authorList>
            <person name="Copeland A."/>
            <person name="Lucas S."/>
            <person name="Lapidus A."/>
            <person name="Glavina del Rio T."/>
            <person name="Dalin E."/>
            <person name="Tice H."/>
            <person name="Bruce D."/>
            <person name="Goodwin L."/>
            <person name="Pitluck S."/>
            <person name="Kiss H."/>
            <person name="Brettin T."/>
            <person name="Detter J.C."/>
            <person name="Han C."/>
            <person name="Kuske C.R."/>
            <person name="Schmutz J."/>
            <person name="Larimer F."/>
            <person name="Land M."/>
            <person name="Hauser L."/>
            <person name="Kyrpides N."/>
            <person name="Mikhailova N."/>
            <person name="Ingram L."/>
            <person name="Richardson P."/>
        </authorList>
    </citation>
    <scope>NUCLEOTIDE SEQUENCE [LARGE SCALE GENOMIC DNA]</scope>
    <source>
        <strain>ATCC 8739 / DSM 1576 / NBRC 3972 / NCIMB 8545 / WDCM 00012 / Crooks</strain>
    </source>
</reference>
<gene>
    <name evidence="1" type="primary">gpmA</name>
    <name type="ordered locus">EcolC_2907</name>
</gene>
<sequence length="250" mass="28556">MAVTKLVLVRHGESQWNKENRFTGWYDVDLSEKGVSEAKAAGKLLKEEGYSFDFAYTSVLKRAIHTLWNVLDELDQAWLPVEKSWKLNERHYGALQGLNKAETAEKYGDEQVKQWRRGFAVTPPELTKDDERYPGHDPRYAKLSEKELPLTESLALTIDRVIPYWNETILPRMKSGERVIIAAHGNSLRALVKYLDNMSEEEILELNIPTGVPLVYEFDENFKPLKRYYLGNADEIAAKAAAVANQGKAK</sequence>
<name>GPMA_ECOLC</name>
<accession>B1IXY1</accession>
<protein>
    <recommendedName>
        <fullName evidence="1">2,3-bisphosphoglycerate-dependent phosphoglycerate mutase</fullName>
        <shortName evidence="1">BPG-dependent PGAM</shortName>
        <shortName evidence="1">PGAM</shortName>
        <shortName evidence="1">Phosphoglyceromutase</shortName>
        <shortName evidence="1">dPGM</shortName>
        <ecNumber evidence="1">5.4.2.11</ecNumber>
    </recommendedName>
</protein>